<sequence length="24" mass="2938">MQWTKPAFTDLRIGFEVTMYFEAR</sequence>
<feature type="chain" id="PRO_1000131194" description="Coenzyme PQQ synthesis protein A">
    <location>
        <begin position="1"/>
        <end position="24"/>
    </location>
</feature>
<feature type="cross-link" description="Pyrroloquinoline quinone (Glu-Tyr)" evidence="1">
    <location>
        <begin position="16"/>
        <end position="20"/>
    </location>
</feature>
<comment type="function">
    <text evidence="1">Required for coenzyme pyrroloquinoline quinone (PQQ) biosynthesis. PQQ is probably formed by cross-linking a specific glutamate to a specific tyrosine residue and excising these residues from the peptide.</text>
</comment>
<comment type="pathway">
    <text evidence="1">Cofactor biosynthesis; pyrroloquinoline quinone biosynthesis.</text>
</comment>
<comment type="similarity">
    <text evidence="1">Belongs to the PqqA family.</text>
</comment>
<dbReference type="EMBL" id="CU468230">
    <property type="protein sequence ID" value="CAP01312.1"/>
    <property type="molecule type" value="Genomic_DNA"/>
</dbReference>
<dbReference type="KEGG" id="abm:ABSDF1979"/>
<dbReference type="HOGENOM" id="CLU_219131_0_0_6"/>
<dbReference type="UniPathway" id="UPA00539"/>
<dbReference type="Proteomes" id="UP000001741">
    <property type="component" value="Chromosome"/>
</dbReference>
<dbReference type="GO" id="GO:0018189">
    <property type="term" value="P:pyrroloquinoline quinone biosynthetic process"/>
    <property type="evidence" value="ECO:0007669"/>
    <property type="project" value="UniProtKB-UniRule"/>
</dbReference>
<dbReference type="HAMAP" id="MF_00656">
    <property type="entry name" value="PQQ_syn_PqqA"/>
    <property type="match status" value="1"/>
</dbReference>
<dbReference type="InterPro" id="IPR011725">
    <property type="entry name" value="PQQ_synth_PqqA"/>
</dbReference>
<dbReference type="NCBIfam" id="TIGR02107">
    <property type="entry name" value="PQQ_syn_pqqA"/>
    <property type="match status" value="1"/>
</dbReference>
<dbReference type="Pfam" id="PF08042">
    <property type="entry name" value="PqqA"/>
    <property type="match status" value="1"/>
</dbReference>
<accession>B0VQD3</accession>
<protein>
    <recommendedName>
        <fullName evidence="1">Coenzyme PQQ synthesis protein A</fullName>
    </recommendedName>
    <alternativeName>
        <fullName evidence="1">Pyrroloquinoline quinone biosynthesis protein A</fullName>
    </alternativeName>
</protein>
<reference key="1">
    <citation type="journal article" date="2008" name="PLoS ONE">
        <title>Comparative analysis of Acinetobacters: three genomes for three lifestyles.</title>
        <authorList>
            <person name="Vallenet D."/>
            <person name="Nordmann P."/>
            <person name="Barbe V."/>
            <person name="Poirel L."/>
            <person name="Mangenot S."/>
            <person name="Bataille E."/>
            <person name="Dossat C."/>
            <person name="Gas S."/>
            <person name="Kreimeyer A."/>
            <person name="Lenoble P."/>
            <person name="Oztas S."/>
            <person name="Poulain J."/>
            <person name="Segurens B."/>
            <person name="Robert C."/>
            <person name="Abergel C."/>
            <person name="Claverie J.-M."/>
            <person name="Raoult D."/>
            <person name="Medigue C."/>
            <person name="Weissenbach J."/>
            <person name="Cruveiller S."/>
        </authorList>
    </citation>
    <scope>NUCLEOTIDE SEQUENCE [LARGE SCALE GENOMIC DNA]</scope>
    <source>
        <strain>SDF</strain>
    </source>
</reference>
<keyword id="KW-0884">PQQ biosynthesis</keyword>
<evidence type="ECO:0000255" key="1">
    <source>
        <dbReference type="HAMAP-Rule" id="MF_00656"/>
    </source>
</evidence>
<proteinExistence type="inferred from homology"/>
<name>PQQA_ACIBS</name>
<organism>
    <name type="scientific">Acinetobacter baumannii (strain SDF)</name>
    <dbReference type="NCBI Taxonomy" id="509170"/>
    <lineage>
        <taxon>Bacteria</taxon>
        <taxon>Pseudomonadati</taxon>
        <taxon>Pseudomonadota</taxon>
        <taxon>Gammaproteobacteria</taxon>
        <taxon>Moraxellales</taxon>
        <taxon>Moraxellaceae</taxon>
        <taxon>Acinetobacter</taxon>
        <taxon>Acinetobacter calcoaceticus/baumannii complex</taxon>
    </lineage>
</organism>
<gene>
    <name evidence="1" type="primary">pqqA</name>
    <name type="ordered locus">ABSDF1979</name>
</gene>